<accession>Q57B71</accession>
<reference key="1">
    <citation type="journal article" date="2005" name="J. Bacteriol.">
        <title>Completion of the genome sequence of Brucella abortus and comparison to the highly similar genomes of Brucella melitensis and Brucella suis.</title>
        <authorList>
            <person name="Halling S.M."/>
            <person name="Peterson-Burch B.D."/>
            <person name="Bricker B.J."/>
            <person name="Zuerner R.L."/>
            <person name="Qing Z."/>
            <person name="Li L.-L."/>
            <person name="Kapur V."/>
            <person name="Alt D.P."/>
            <person name="Olsen S.C."/>
        </authorList>
    </citation>
    <scope>NUCLEOTIDE SEQUENCE [LARGE SCALE GENOMIC DNA]</scope>
    <source>
        <strain>9-941</strain>
    </source>
</reference>
<dbReference type="EC" id="2.1.2.3" evidence="1"/>
<dbReference type="EC" id="3.5.4.10" evidence="1"/>
<dbReference type="EMBL" id="AE017223">
    <property type="protein sequence ID" value="AAX75113.1"/>
    <property type="molecule type" value="Genomic_DNA"/>
</dbReference>
<dbReference type="RefSeq" id="WP_002964894.1">
    <property type="nucleotide sequence ID" value="NC_006932.1"/>
</dbReference>
<dbReference type="SMR" id="Q57B71"/>
<dbReference type="EnsemblBacteria" id="AAX75113">
    <property type="protein sequence ID" value="AAX75113"/>
    <property type="gene ID" value="BruAb1_1796"/>
</dbReference>
<dbReference type="GeneID" id="93017844"/>
<dbReference type="KEGG" id="bmb:BruAb1_1796"/>
<dbReference type="HOGENOM" id="CLU_016316_5_2_5"/>
<dbReference type="UniPathway" id="UPA00074">
    <property type="reaction ID" value="UER00133"/>
</dbReference>
<dbReference type="UniPathway" id="UPA00074">
    <property type="reaction ID" value="UER00135"/>
</dbReference>
<dbReference type="PRO" id="PR:Q57B71"/>
<dbReference type="Proteomes" id="UP000000540">
    <property type="component" value="Chromosome I"/>
</dbReference>
<dbReference type="GO" id="GO:0005829">
    <property type="term" value="C:cytosol"/>
    <property type="evidence" value="ECO:0007669"/>
    <property type="project" value="TreeGrafter"/>
</dbReference>
<dbReference type="GO" id="GO:0003937">
    <property type="term" value="F:IMP cyclohydrolase activity"/>
    <property type="evidence" value="ECO:0007669"/>
    <property type="project" value="UniProtKB-UniRule"/>
</dbReference>
<dbReference type="GO" id="GO:0004643">
    <property type="term" value="F:phosphoribosylaminoimidazolecarboxamide formyltransferase activity"/>
    <property type="evidence" value="ECO:0007669"/>
    <property type="project" value="UniProtKB-UniRule"/>
</dbReference>
<dbReference type="GO" id="GO:0006189">
    <property type="term" value="P:'de novo' IMP biosynthetic process"/>
    <property type="evidence" value="ECO:0007669"/>
    <property type="project" value="UniProtKB-UniRule"/>
</dbReference>
<dbReference type="CDD" id="cd01421">
    <property type="entry name" value="IMPCH"/>
    <property type="match status" value="1"/>
</dbReference>
<dbReference type="FunFam" id="3.40.140.20:FF:000001">
    <property type="entry name" value="Bifunctional purine biosynthesis protein PurH"/>
    <property type="match status" value="1"/>
</dbReference>
<dbReference type="FunFam" id="3.40.140.20:FF:000002">
    <property type="entry name" value="Bifunctional purine biosynthesis protein PurH"/>
    <property type="match status" value="1"/>
</dbReference>
<dbReference type="FunFam" id="3.40.50.1380:FF:000001">
    <property type="entry name" value="Bifunctional purine biosynthesis protein PurH"/>
    <property type="match status" value="1"/>
</dbReference>
<dbReference type="Gene3D" id="3.40.140.20">
    <property type="match status" value="2"/>
</dbReference>
<dbReference type="Gene3D" id="3.40.50.1380">
    <property type="entry name" value="Methylglyoxal synthase-like domain"/>
    <property type="match status" value="1"/>
</dbReference>
<dbReference type="HAMAP" id="MF_00139">
    <property type="entry name" value="PurH"/>
    <property type="match status" value="1"/>
</dbReference>
<dbReference type="InterPro" id="IPR024051">
    <property type="entry name" value="AICAR_Tfase_dup_dom_sf"/>
</dbReference>
<dbReference type="InterPro" id="IPR016193">
    <property type="entry name" value="Cytidine_deaminase-like"/>
</dbReference>
<dbReference type="InterPro" id="IPR011607">
    <property type="entry name" value="MGS-like_dom"/>
</dbReference>
<dbReference type="InterPro" id="IPR036914">
    <property type="entry name" value="MGS-like_dom_sf"/>
</dbReference>
<dbReference type="InterPro" id="IPR002695">
    <property type="entry name" value="PurH-like"/>
</dbReference>
<dbReference type="NCBIfam" id="NF002049">
    <property type="entry name" value="PRK00881.1"/>
    <property type="match status" value="1"/>
</dbReference>
<dbReference type="NCBIfam" id="TIGR00355">
    <property type="entry name" value="purH"/>
    <property type="match status" value="1"/>
</dbReference>
<dbReference type="PANTHER" id="PTHR11692:SF0">
    <property type="entry name" value="BIFUNCTIONAL PURINE BIOSYNTHESIS PROTEIN ATIC"/>
    <property type="match status" value="1"/>
</dbReference>
<dbReference type="PANTHER" id="PTHR11692">
    <property type="entry name" value="BIFUNCTIONAL PURINE BIOSYNTHESIS PROTEIN PURH"/>
    <property type="match status" value="1"/>
</dbReference>
<dbReference type="Pfam" id="PF01808">
    <property type="entry name" value="AICARFT_IMPCHas"/>
    <property type="match status" value="1"/>
</dbReference>
<dbReference type="Pfam" id="PF02142">
    <property type="entry name" value="MGS"/>
    <property type="match status" value="1"/>
</dbReference>
<dbReference type="PIRSF" id="PIRSF000414">
    <property type="entry name" value="AICARFT_IMPCHas"/>
    <property type="match status" value="1"/>
</dbReference>
<dbReference type="SMART" id="SM00798">
    <property type="entry name" value="AICARFT_IMPCHas"/>
    <property type="match status" value="1"/>
</dbReference>
<dbReference type="SMART" id="SM00851">
    <property type="entry name" value="MGS"/>
    <property type="match status" value="1"/>
</dbReference>
<dbReference type="SUPFAM" id="SSF53927">
    <property type="entry name" value="Cytidine deaminase-like"/>
    <property type="match status" value="1"/>
</dbReference>
<dbReference type="SUPFAM" id="SSF52335">
    <property type="entry name" value="Methylglyoxal synthase-like"/>
    <property type="match status" value="1"/>
</dbReference>
<dbReference type="PROSITE" id="PS51855">
    <property type="entry name" value="MGS"/>
    <property type="match status" value="1"/>
</dbReference>
<keyword id="KW-0378">Hydrolase</keyword>
<keyword id="KW-0511">Multifunctional enzyme</keyword>
<keyword id="KW-0658">Purine biosynthesis</keyword>
<keyword id="KW-0808">Transferase</keyword>
<name>PUR9_BRUAB</name>
<organism>
    <name type="scientific">Brucella abortus biovar 1 (strain 9-941)</name>
    <dbReference type="NCBI Taxonomy" id="262698"/>
    <lineage>
        <taxon>Bacteria</taxon>
        <taxon>Pseudomonadati</taxon>
        <taxon>Pseudomonadota</taxon>
        <taxon>Alphaproteobacteria</taxon>
        <taxon>Hyphomicrobiales</taxon>
        <taxon>Brucellaceae</taxon>
        <taxon>Brucella/Ochrobactrum group</taxon>
        <taxon>Brucella</taxon>
    </lineage>
</organism>
<feature type="chain" id="PRO_1000018849" description="Bifunctional purine biosynthesis protein PurH">
    <location>
        <begin position="1"/>
        <end position="538"/>
    </location>
</feature>
<feature type="domain" description="MGS-like" evidence="2">
    <location>
        <begin position="6"/>
        <end position="158"/>
    </location>
</feature>
<gene>
    <name evidence="1" type="primary">purH</name>
    <name type="ordered locus">BruAb1_1796</name>
</gene>
<protein>
    <recommendedName>
        <fullName evidence="1">Bifunctional purine biosynthesis protein PurH</fullName>
    </recommendedName>
    <domain>
        <recommendedName>
            <fullName evidence="1">Phosphoribosylaminoimidazolecarboxamide formyltransferase</fullName>
            <ecNumber evidence="1">2.1.2.3</ecNumber>
        </recommendedName>
        <alternativeName>
            <fullName evidence="1">AICAR transformylase</fullName>
        </alternativeName>
    </domain>
    <domain>
        <recommendedName>
            <fullName evidence="1">IMP cyclohydrolase</fullName>
            <ecNumber evidence="1">3.5.4.10</ecNumber>
        </recommendedName>
        <alternativeName>
            <fullName evidence="1">ATIC</fullName>
        </alternativeName>
        <alternativeName>
            <fullName evidence="1">IMP synthase</fullName>
        </alternativeName>
        <alternativeName>
            <fullName evidence="1">Inosinicase</fullName>
        </alternativeName>
    </domain>
</protein>
<comment type="catalytic activity">
    <reaction evidence="1">
        <text>(6R)-10-formyltetrahydrofolate + 5-amino-1-(5-phospho-beta-D-ribosyl)imidazole-4-carboxamide = 5-formamido-1-(5-phospho-D-ribosyl)imidazole-4-carboxamide + (6S)-5,6,7,8-tetrahydrofolate</text>
        <dbReference type="Rhea" id="RHEA:22192"/>
        <dbReference type="ChEBI" id="CHEBI:57453"/>
        <dbReference type="ChEBI" id="CHEBI:58467"/>
        <dbReference type="ChEBI" id="CHEBI:58475"/>
        <dbReference type="ChEBI" id="CHEBI:195366"/>
        <dbReference type="EC" id="2.1.2.3"/>
    </reaction>
</comment>
<comment type="catalytic activity">
    <reaction evidence="1">
        <text>IMP + H2O = 5-formamido-1-(5-phospho-D-ribosyl)imidazole-4-carboxamide</text>
        <dbReference type="Rhea" id="RHEA:18445"/>
        <dbReference type="ChEBI" id="CHEBI:15377"/>
        <dbReference type="ChEBI" id="CHEBI:58053"/>
        <dbReference type="ChEBI" id="CHEBI:58467"/>
        <dbReference type="EC" id="3.5.4.10"/>
    </reaction>
</comment>
<comment type="pathway">
    <text evidence="1">Purine metabolism; IMP biosynthesis via de novo pathway; 5-formamido-1-(5-phospho-D-ribosyl)imidazole-4-carboxamide from 5-amino-1-(5-phospho-D-ribosyl)imidazole-4-carboxamide (10-formyl THF route): step 1/1.</text>
</comment>
<comment type="pathway">
    <text evidence="1">Purine metabolism; IMP biosynthesis via de novo pathway; IMP from 5-formamido-1-(5-phospho-D-ribosyl)imidazole-4-carboxamide: step 1/1.</text>
</comment>
<comment type="domain">
    <text evidence="1">The IMP cyclohydrolase activity resides in the N-terminal region.</text>
</comment>
<comment type="similarity">
    <text evidence="1">Belongs to the PurH family.</text>
</comment>
<sequence length="538" mass="56453">MAVSSKHIPAPDLHRVRRALLSVSDKTGLIDFAKALHANGVEILSTGGTAKSIAAAGIPVKDVSEITGFPEIMDGRVKTLHPAVHGGLLAVRNDPEHVAAMEEHGIGGIDLAVINLYPFEEVRFKGGDYDTTVENIDIGGPAMIRASAKNHAYVATVVDPADYADVVAELEKHSGSLPLAFRKKLAAKAFSRTAAYDAAISNWFAEAIDEETPTYRAAAGKLHSVMRYGENPHQTAGFYLTGEKRPGVATATQLQGKQLSYNNINDTDAAFELVAEFDPARTAAVAIIKHANPCGVAEASTIKEAYLKALACDPVSAFGGIVALNRTLDEEAAEEIVKTFTEVIIAPDATEGAQAIVAAKKNLRLLVTGGLPDPRAKGIAAKTVAGGLLVQSRDNGVVDDLDLKVVTKRAPTEAELNDLKFAFRVGKHVKSNAIVYVKDGATVGIGAGQMSRVDSARIAARKAEDAAEAAGLAAPLTKGCVVASDAFFPFADGLLSAVEAGATAVIQPGGSMRDDEVIAAADEHGIAMVMTGMRHFRH</sequence>
<evidence type="ECO:0000255" key="1">
    <source>
        <dbReference type="HAMAP-Rule" id="MF_00139"/>
    </source>
</evidence>
<evidence type="ECO:0000255" key="2">
    <source>
        <dbReference type="PROSITE-ProRule" id="PRU01202"/>
    </source>
</evidence>
<proteinExistence type="inferred from homology"/>